<organism>
    <name type="scientific">Homo sapiens</name>
    <name type="common">Human</name>
    <dbReference type="NCBI Taxonomy" id="9606"/>
    <lineage>
        <taxon>Eukaryota</taxon>
        <taxon>Metazoa</taxon>
        <taxon>Chordata</taxon>
        <taxon>Craniata</taxon>
        <taxon>Vertebrata</taxon>
        <taxon>Euteleostomi</taxon>
        <taxon>Mammalia</taxon>
        <taxon>Eutheria</taxon>
        <taxon>Euarchontoglires</taxon>
        <taxon>Primates</taxon>
        <taxon>Haplorrhini</taxon>
        <taxon>Catarrhini</taxon>
        <taxon>Hominidae</taxon>
        <taxon>Homo</taxon>
    </lineage>
</organism>
<proteinExistence type="evidence at protein level"/>
<comment type="function">
    <molecule>Isoform 1</molecule>
    <text evidence="1 4 9">UDP-glucuronosyltransferase (UGT) that catalyzes phase II biotransformation reactions in which lipophilic substrates are conjugated with glucuronic acid to facilitate their inactivation and excretion from the body (PubMed:15231852, PubMed:21422672). Essential for the elimination and detoxification of drugs, xenobiotics and endogenous compounds (PubMed:15231852, PubMed:21422672). Involved in the glucuronidation of arachidonic acid (AA) and AA-derived eicosanoids including 15-HETE and 20-HETE (PubMed:15231852). Conjugates small planar phenolic molecules such as 4-nitrophenol, 1-naphthol, and 4-methylumbelliferone. The bulky phenol 4-hydroxybiphenyl, androgens and estrogens are not substrates. 2-hydroxybiphenyl is an excellent substrate (By similarity). Involved in the glucuronidation of the phytochemical ferulic acid at the phenolic or the carboxylic acid group (PubMed:21422672).</text>
</comment>
<comment type="function">
    <molecule>Isoform 3</molecule>
    <text evidence="8">Isoform 3 lacks transferase activity but acts as a negative regulator of isoform 1.</text>
</comment>
<comment type="catalytic activity">
    <reaction evidence="4 9">
        <text>glucuronate acceptor + UDP-alpha-D-glucuronate = acceptor beta-D-glucuronoside + UDP + H(+)</text>
        <dbReference type="Rhea" id="RHEA:21032"/>
        <dbReference type="ChEBI" id="CHEBI:15378"/>
        <dbReference type="ChEBI" id="CHEBI:58052"/>
        <dbReference type="ChEBI" id="CHEBI:58223"/>
        <dbReference type="ChEBI" id="CHEBI:132367"/>
        <dbReference type="ChEBI" id="CHEBI:132368"/>
        <dbReference type="EC" id="2.4.1.17"/>
    </reaction>
    <physiologicalReaction direction="left-to-right" evidence="16 17">
        <dbReference type="Rhea" id="RHEA:21033"/>
    </physiologicalReaction>
</comment>
<comment type="catalytic activity">
    <reaction evidence="4">
        <text>(5Z,8Z,11Z,14Z)-eicosatetraenoate + UDP-alpha-D-glucuronate = O-[(5Z),(8Z),(11Z),(14Z)-eicosatetraenoyl]-beta-D-glucuronate + UDP</text>
        <dbReference type="Rhea" id="RHEA:79915"/>
        <dbReference type="ChEBI" id="CHEBI:32395"/>
        <dbReference type="ChEBI" id="CHEBI:58052"/>
        <dbReference type="ChEBI" id="CHEBI:58223"/>
        <dbReference type="ChEBI" id="CHEBI:231327"/>
    </reaction>
    <physiologicalReaction direction="left-to-right" evidence="16">
        <dbReference type="Rhea" id="RHEA:79916"/>
    </physiologicalReaction>
</comment>
<comment type="catalytic activity">
    <reaction evidence="4">
        <text>15-hydroxy-(5Z,8Z,11Z,13E)-eicosatetraenoate + UDP-alpha-D-glucuronate = 15-O-(beta-D-glucuronosyl)-(5Z,8Z,11Z,14Z)-eicosatetraenoate + UDP + H(+)</text>
        <dbReference type="Rhea" id="RHEA:79919"/>
        <dbReference type="ChEBI" id="CHEBI:15378"/>
        <dbReference type="ChEBI" id="CHEBI:58052"/>
        <dbReference type="ChEBI" id="CHEBI:58223"/>
        <dbReference type="ChEBI" id="CHEBI:78832"/>
        <dbReference type="ChEBI" id="CHEBI:231329"/>
    </reaction>
    <physiologicalReaction direction="left-to-right" evidence="16">
        <dbReference type="Rhea" id="RHEA:79920"/>
    </physiologicalReaction>
</comment>
<comment type="catalytic activity">
    <reaction evidence="9">
        <text>(E)-ferulate + UDP-alpha-D-glucuronate = (E)-4-O-(beta-D-glucuronosyl)-ferulate + UDP + H(+)</text>
        <dbReference type="Rhea" id="RHEA:79951"/>
        <dbReference type="ChEBI" id="CHEBI:15378"/>
        <dbReference type="ChEBI" id="CHEBI:29749"/>
        <dbReference type="ChEBI" id="CHEBI:58052"/>
        <dbReference type="ChEBI" id="CHEBI:58223"/>
        <dbReference type="ChEBI" id="CHEBI:231331"/>
    </reaction>
    <physiologicalReaction direction="left-to-right" evidence="17">
        <dbReference type="Rhea" id="RHEA:79952"/>
    </physiologicalReaction>
</comment>
<comment type="catalytic activity">
    <reaction evidence="9">
        <text>(E)-ferulate + UDP-alpha-D-glucuronate = (E)-ferulic acid beta-D-glucuronate ester + UDP</text>
        <dbReference type="Rhea" id="RHEA:79955"/>
        <dbReference type="ChEBI" id="CHEBI:29749"/>
        <dbReference type="ChEBI" id="CHEBI:58052"/>
        <dbReference type="ChEBI" id="CHEBI:58223"/>
        <dbReference type="ChEBI" id="CHEBI:231332"/>
    </reaction>
    <physiologicalReaction direction="left-to-right" evidence="17">
        <dbReference type="Rhea" id="RHEA:79956"/>
    </physiologicalReaction>
</comment>
<comment type="biophysicochemical properties">
    <kinetics>
        <KM evidence="9">7160 uM for (E)-ferulate (when assaying glucuronidation at the phenolic group)</KM>
        <KM evidence="9">5870 uM for (E)-ferulate (when assaying glucuronidation at the carboxylic acid group)</KM>
        <Vmax evidence="9">174.1 pmol/min/mg enzyme for the formation of (E)-4-O-(beta-D-glucuronosyl)-ferulate</Vmax>
        <Vmax evidence="9">1.5 pmol/min/mg enzyme for the formation of (E)-ferulic acid beta-D-glucuronate ester</Vmax>
    </kinetics>
</comment>
<comment type="subunit">
    <text evidence="8">Isoform 1 interacts with isoform 3/i2 suggesting that oligomerization is involved in negative regulation of transferase activity by isoform 3. Isoform 1 also interacts with respective i2 isoforms of UGT1A1, UGT1A3, UGT1A4, UGT1A7, UGT1A8, UGT1A9 and UGT1A10.</text>
</comment>
<comment type="subcellular location">
    <subcellularLocation>
        <location>Microsome</location>
    </subcellularLocation>
    <subcellularLocation>
        <location evidence="15">Endoplasmic reticulum membrane</location>
        <topology evidence="15">Single-pass membrane protein</topology>
    </subcellularLocation>
</comment>
<comment type="alternative products">
    <event type="alternative splicing"/>
    <isoform>
        <id>P19224-1</id>
        <name>1</name>
        <name>i1</name>
        <sequence type="displayed"/>
    </isoform>
    <isoform>
        <id>P19224-2</id>
        <name>2</name>
        <sequence type="described" ref="VSP_045779"/>
    </isoform>
    <isoform>
        <id>P19224-3</id>
        <name>3</name>
        <name>i2</name>
        <name>UGT1A6s</name>
        <sequence type="described" ref="VSP_053962"/>
    </isoform>
</comment>
<comment type="tissue specificity">
    <text evidence="3 6">Expressed in skin. Isoforms 1 and 3 are expressed in kidney and liver. Isoform 1 but not isoform 2 is expressed in colon, esophagus and small intestine.</text>
</comment>
<comment type="polymorphism">
    <text evidence="5 10">Polymorphisms in the UGT1A6 gene define four common haplotypes: UGT1A6*1, UGT1A6*2, UGT1A6*3 and UGT1A6*4. Liver tissue samples that were homozygous for UGT1A6*2 exhibited a high rate of glucuronidation relative to tissues with other genotypes. Biochemical kinetic studies indicate that the UGT1A6*2 allozyme, expressed homozygously, had almost two-fold greater activity toward p-nitrophenol than UGT1A6*1 and when expressed heterozygously (UGT1A6*1/*2) it is associated with low enzyme activity. Common genetic variation in UGT1A6 confers functionally significant differences in biochemical phenotype. This genetic variation might impact clinical efficacy or toxicity of drugs metabolized by UGT1A6.</text>
</comment>
<comment type="miscellaneous">
    <text evidence="8">The gene is part of the UGT1A complex locus which displays alternative use of promoters, first exons and terminal exons. The locus is defined by 13 first exons, which are alternatively spliced to 3 other common exons and 2 alternative terminal exons 5. From the 27 possible mRNA isoforms, 9 produce functionally active polypeptides (UGT1A1, 1A3, 1A4, 1A5, 1A6, 1A7, 1A8, 1A9 and 1A10) called isoforms 1 (i1). Use of an alternative exon 5 (5b) as terminal exon is leading to 9 additional alternatively spliced products termed isoforms i2 and which lack transferase activity.</text>
</comment>
<comment type="similarity">
    <text evidence="15">Belongs to the UDP-glycosyltransferase family.</text>
</comment>
<comment type="sequence caution" evidence="15">
    <conflict type="erroneous termination">
        <sequence resource="EMBL" id="BM924331"/>
    </conflict>
    <text>Truncated C-terminus.</text>
</comment>
<comment type="sequence caution" evidence="15">
    <conflict type="frameshift">
        <sequence resource="EMBL" id="BM924331"/>
    </conflict>
</comment>
<comment type="sequence caution" evidence="15">
    <conflict type="miscellaneous discrepancy">
        <sequence resource="EMBL" id="BM924331"/>
    </conflict>
    <text>Probable cloning artifact.</text>
</comment>
<accession>P19224</accession>
<accession>A6NKK6</accession>
<accession>B8K289</accession>
<accession>Q96TE7</accession>
<name>UD16_HUMAN</name>
<gene>
    <name evidence="18" type="primary">UGT1A6</name>
    <name type="synonym">GNT1</name>
    <name type="synonym">UGT1</name>
</gene>
<evidence type="ECO:0000250" key="1">
    <source>
        <dbReference type="UniProtKB" id="Q64435"/>
    </source>
</evidence>
<evidence type="ECO:0000255" key="2"/>
<evidence type="ECO:0000269" key="3">
    <source>
    </source>
</evidence>
<evidence type="ECO:0000269" key="4">
    <source>
    </source>
</evidence>
<evidence type="ECO:0000269" key="5">
    <source>
    </source>
</evidence>
<evidence type="ECO:0000269" key="6">
    <source>
    </source>
</evidence>
<evidence type="ECO:0000269" key="7">
    <source>
    </source>
</evidence>
<evidence type="ECO:0000269" key="8">
    <source>
    </source>
</evidence>
<evidence type="ECO:0000269" key="9">
    <source>
    </source>
</evidence>
<evidence type="ECO:0000269" key="10">
    <source>
    </source>
</evidence>
<evidence type="ECO:0000269" key="11">
    <source ref="4"/>
</evidence>
<evidence type="ECO:0000303" key="12">
    <source>
    </source>
</evidence>
<evidence type="ECO:0000303" key="13">
    <source>
    </source>
</evidence>
<evidence type="ECO:0000303" key="14">
    <source ref="4"/>
</evidence>
<evidence type="ECO:0000305" key="15"/>
<evidence type="ECO:0000305" key="16">
    <source>
    </source>
</evidence>
<evidence type="ECO:0000305" key="17">
    <source>
    </source>
</evidence>
<evidence type="ECO:0000312" key="18">
    <source>
        <dbReference type="HGNC" id="HGNC:12538"/>
    </source>
</evidence>
<dbReference type="EC" id="2.4.1.17" evidence="4 9"/>
<dbReference type="EMBL" id="M84130">
    <property type="protein sequence ID" value="AAC41717.1"/>
    <property type="molecule type" value="Genomic_DNA"/>
</dbReference>
<dbReference type="EMBL" id="M84124">
    <property type="protein sequence ID" value="AAA61247.1"/>
    <property type="status" value="ALT_SEQ"/>
    <property type="molecule type" value="Genomic_DNA"/>
</dbReference>
<dbReference type="EMBL" id="M84122">
    <property type="protein sequence ID" value="AAA61247.1"/>
    <property type="status" value="JOINED"/>
    <property type="molecule type" value="Genomic_DNA"/>
</dbReference>
<dbReference type="EMBL" id="M84123">
    <property type="protein sequence ID" value="AAA61247.1"/>
    <property type="status" value="JOINED"/>
    <property type="molecule type" value="Genomic_DNA"/>
</dbReference>
<dbReference type="EMBL" id="J04093">
    <property type="protein sequence ID" value="AAA61251.1"/>
    <property type="molecule type" value="mRNA"/>
</dbReference>
<dbReference type="EMBL" id="AF297093">
    <property type="protein sequence ID" value="AAG30420.1"/>
    <property type="molecule type" value="Genomic_DNA"/>
</dbReference>
<dbReference type="EMBL" id="DQ364250">
    <property type="protein sequence ID" value="ABC96774.1"/>
    <property type="molecule type" value="mRNA"/>
</dbReference>
<dbReference type="EMBL" id="AC006985">
    <property type="status" value="NOT_ANNOTATED_CDS"/>
    <property type="molecule type" value="Genomic_DNA"/>
</dbReference>
<dbReference type="EMBL" id="AC114812">
    <property type="status" value="NOT_ANNOTATED_CDS"/>
    <property type="molecule type" value="Genomic_DNA"/>
</dbReference>
<dbReference type="EMBL" id="BM924331">
    <property type="status" value="NOT_ANNOTATED_CDS"/>
    <property type="molecule type" value="mRNA"/>
</dbReference>
<dbReference type="EMBL" id="AF014112">
    <property type="protein sequence ID" value="AAB87411.1"/>
    <property type="molecule type" value="Genomic_DNA"/>
</dbReference>
<dbReference type="CCDS" id="CCDS2507.1">
    <molecule id="P19224-1"/>
</dbReference>
<dbReference type="CCDS" id="CCDS2508.1">
    <molecule id="P19224-2"/>
</dbReference>
<dbReference type="PIR" id="A31340">
    <property type="entry name" value="A31340"/>
</dbReference>
<dbReference type="RefSeq" id="NP_001063.2">
    <molecule id="P19224-1"/>
    <property type="nucleotide sequence ID" value="NM_001072.3"/>
</dbReference>
<dbReference type="RefSeq" id="NP_995584.1">
    <molecule id="P19224-2"/>
    <property type="nucleotide sequence ID" value="NM_205862.3"/>
</dbReference>
<dbReference type="SMR" id="P19224"/>
<dbReference type="BioGRID" id="120056">
    <property type="interactions" value="3"/>
</dbReference>
<dbReference type="FunCoup" id="P19224">
    <property type="interactions" value="775"/>
</dbReference>
<dbReference type="IntAct" id="P19224">
    <property type="interactions" value="7"/>
</dbReference>
<dbReference type="STRING" id="9606.ENSP00000303174"/>
<dbReference type="BindingDB" id="P19224"/>
<dbReference type="ChEMBL" id="CHEMBL1743316"/>
<dbReference type="DrugBank" id="DB00316">
    <property type="generic name" value="Acetaminophen"/>
</dbReference>
<dbReference type="DrugBank" id="DB00945">
    <property type="generic name" value="Acetylsalicylic acid"/>
</dbReference>
<dbReference type="DrugBank" id="DB00714">
    <property type="generic name" value="Apomorphine"/>
</dbReference>
<dbReference type="DrugBank" id="DB00564">
    <property type="generic name" value="Carbamazepine"/>
</dbReference>
<dbReference type="DrugBank" id="DB00349">
    <property type="generic name" value="Clobazam"/>
</dbReference>
<dbReference type="DrugBank" id="DB14635">
    <property type="generic name" value="Curcumin sulfate"/>
</dbReference>
<dbReference type="DrugBank" id="DB08826">
    <property type="generic name" value="Deferiprone"/>
</dbReference>
<dbReference type="DrugBank" id="DB12243">
    <property type="generic name" value="Edaravone"/>
</dbReference>
<dbReference type="DrugBank" id="DB05187">
    <property type="generic name" value="Elafibranor"/>
</dbReference>
<dbReference type="DrugBank" id="DB11979">
    <property type="generic name" value="Elagolix"/>
</dbReference>
<dbReference type="DrugBank" id="DB00783">
    <property type="generic name" value="Estradiol"/>
</dbReference>
<dbReference type="DrugBank" id="DB15598">
    <property type="generic name" value="Ferric maltol"/>
</dbReference>
<dbReference type="DrugBank" id="DB01320">
    <property type="generic name" value="Fosphenytoin"/>
</dbReference>
<dbReference type="DrugBank" id="DB11796">
    <property type="generic name" value="Fostemsavir"/>
</dbReference>
<dbReference type="DrugBank" id="DB12471">
    <property type="generic name" value="Ibrexafungerp"/>
</dbReference>
<dbReference type="DrugBank" id="DB00555">
    <property type="generic name" value="Lamotrigine"/>
</dbReference>
<dbReference type="DrugBank" id="DB05018">
    <property type="generic name" value="Migalastat"/>
</dbReference>
<dbReference type="DrugBank" id="DB00688">
    <property type="generic name" value="Mycophenolate mofetil"/>
</dbReference>
<dbReference type="DrugBank" id="DB01024">
    <property type="generic name" value="Mycophenolic acid"/>
</dbReference>
<dbReference type="DrugBank" id="DB00788">
    <property type="generic name" value="Naproxen"/>
</dbReference>
<dbReference type="DrugBank" id="DB00252">
    <property type="generic name" value="Phenytoin"/>
</dbReference>
<dbReference type="DrugBank" id="DB00960">
    <property type="generic name" value="Pindolol"/>
</dbReference>
<dbReference type="DrugBank" id="DB00794">
    <property type="generic name" value="Primidone"/>
</dbReference>
<dbReference type="DrugBank" id="DB09288">
    <property type="generic name" value="Propacetamol"/>
</dbReference>
<dbReference type="DrugBank" id="DB00818">
    <property type="generic name" value="Propofol"/>
</dbReference>
<dbReference type="DrugBank" id="DB00503">
    <property type="generic name" value="Ritonavir"/>
</dbReference>
<dbReference type="DrugBank" id="DB00871">
    <property type="generic name" value="Terbutaline"/>
</dbReference>
<dbReference type="DrugBank" id="DB00197">
    <property type="generic name" value="Troglitazone"/>
</dbReference>
<dbReference type="DrugBank" id="DB00313">
    <property type="generic name" value="Valproic acid"/>
</dbReference>
<dbReference type="DrugCentral" id="P19224"/>
<dbReference type="CAZy" id="GT1">
    <property type="family name" value="Glycosyltransferase Family 1"/>
</dbReference>
<dbReference type="GlyConnect" id="1878">
    <property type="glycosylation" value="2 N-Linked glycans (1 site)"/>
</dbReference>
<dbReference type="GlyCosmos" id="P19224">
    <property type="glycosylation" value="2 sites, 2 glycans"/>
</dbReference>
<dbReference type="GlyGen" id="P19224">
    <property type="glycosylation" value="2 sites, 2 N-linked glycans (1 site)"/>
</dbReference>
<dbReference type="iPTMnet" id="P19224"/>
<dbReference type="PhosphoSitePlus" id="P19224"/>
<dbReference type="BioMuta" id="UGT1A6"/>
<dbReference type="DMDM" id="29840832"/>
<dbReference type="jPOST" id="P19224"/>
<dbReference type="MassIVE" id="P19224"/>
<dbReference type="PaxDb" id="9606-ENSP00000303174"/>
<dbReference type="PeptideAtlas" id="P19224"/>
<dbReference type="ProteomicsDB" id="1419"/>
<dbReference type="ProteomicsDB" id="53637">
    <molecule id="P19224-1"/>
</dbReference>
<dbReference type="Antibodypedia" id="4074">
    <property type="antibodies" value="139 antibodies from 27 providers"/>
</dbReference>
<dbReference type="DNASU" id="54578"/>
<dbReference type="Ensembl" id="ENST00000305139.11">
    <molecule id="P19224-1"/>
    <property type="protein sequence ID" value="ENSP00000303174.6"/>
    <property type="gene ID" value="ENSG00000167165.19"/>
</dbReference>
<dbReference type="Ensembl" id="ENST00000373424.5">
    <molecule id="P19224-2"/>
    <property type="protein sequence ID" value="ENSP00000362523.1"/>
    <property type="gene ID" value="ENSG00000167165.19"/>
</dbReference>
<dbReference type="GeneID" id="54578"/>
<dbReference type="KEGG" id="hsa:54578"/>
<dbReference type="MANE-Select" id="ENST00000305139.11">
    <property type="protein sequence ID" value="ENSP00000303174.6"/>
    <property type="RefSeq nucleotide sequence ID" value="NM_001072.4"/>
    <property type="RefSeq protein sequence ID" value="NP_001063.2"/>
</dbReference>
<dbReference type="UCSC" id="uc002vuu.4">
    <molecule id="P19224-1"/>
    <property type="organism name" value="human"/>
</dbReference>
<dbReference type="AGR" id="HGNC:12538"/>
<dbReference type="CTD" id="54578"/>
<dbReference type="DisGeNET" id="54578"/>
<dbReference type="GeneCards" id="UGT1A6"/>
<dbReference type="HGNC" id="HGNC:12538">
    <property type="gene designation" value="UGT1A6"/>
</dbReference>
<dbReference type="HPA" id="ENSG00000167165">
    <property type="expression patterns" value="Group enriched (kidney, liver, urinary bladder)"/>
</dbReference>
<dbReference type="MalaCards" id="UGT1A6"/>
<dbReference type="MIM" id="191740">
    <property type="type" value="gene"/>
</dbReference>
<dbReference type="MIM" id="606431">
    <property type="type" value="gene"/>
</dbReference>
<dbReference type="neXtProt" id="NX_P19224"/>
<dbReference type="OpenTargets" id="ENSG00000167165"/>
<dbReference type="PharmGKB" id="PA37181"/>
<dbReference type="VEuPathDB" id="HostDB:ENSG00000167165"/>
<dbReference type="eggNOG" id="KOG1192">
    <property type="taxonomic scope" value="Eukaryota"/>
</dbReference>
<dbReference type="GeneTree" id="ENSGT00940000163820"/>
<dbReference type="HOGENOM" id="CLU_012949_2_1_1"/>
<dbReference type="InParanoid" id="P19224"/>
<dbReference type="OMA" id="WLSMENI"/>
<dbReference type="OrthoDB" id="5835829at2759"/>
<dbReference type="PAN-GO" id="P19224">
    <property type="GO annotations" value="4 GO annotations based on evolutionary models"/>
</dbReference>
<dbReference type="PhylomeDB" id="P19224"/>
<dbReference type="TreeFam" id="TF315472"/>
<dbReference type="BRENDA" id="2.4.1.17">
    <property type="organism ID" value="2681"/>
</dbReference>
<dbReference type="PathwayCommons" id="P19224"/>
<dbReference type="Reactome" id="R-HSA-156588">
    <property type="pathway name" value="Glucuronidation"/>
</dbReference>
<dbReference type="Reactome" id="R-HSA-9749641">
    <property type="pathway name" value="Aspirin ADME"/>
</dbReference>
<dbReference type="Reactome" id="R-HSA-9753281">
    <property type="pathway name" value="Paracetamol ADME"/>
</dbReference>
<dbReference type="SABIO-RK" id="P19224"/>
<dbReference type="SignaLink" id="P19224"/>
<dbReference type="BioGRID-ORCS" id="54578">
    <property type="hits" value="18 hits in 1012 CRISPR screens"/>
</dbReference>
<dbReference type="ChiTaRS" id="UGT1A6">
    <property type="organism name" value="human"/>
</dbReference>
<dbReference type="GeneWiki" id="UGT1A6"/>
<dbReference type="GenomeRNAi" id="54578"/>
<dbReference type="Pharos" id="P19224">
    <property type="development level" value="Tbio"/>
</dbReference>
<dbReference type="PRO" id="PR:P19224"/>
<dbReference type="Proteomes" id="UP000005640">
    <property type="component" value="Chromosome 2"/>
</dbReference>
<dbReference type="RNAct" id="P19224">
    <property type="molecule type" value="protein"/>
</dbReference>
<dbReference type="Bgee" id="ENSG00000167165">
    <property type="expression patterns" value="Expressed in liver and 66 other cell types or tissues"/>
</dbReference>
<dbReference type="ExpressionAtlas" id="P19224">
    <property type="expression patterns" value="baseline and differential"/>
</dbReference>
<dbReference type="GO" id="GO:0005783">
    <property type="term" value="C:endoplasmic reticulum"/>
    <property type="evidence" value="ECO:0000314"/>
    <property type="project" value="HPA"/>
</dbReference>
<dbReference type="GO" id="GO:0005789">
    <property type="term" value="C:endoplasmic reticulum membrane"/>
    <property type="evidence" value="ECO:0000304"/>
    <property type="project" value="Reactome"/>
</dbReference>
<dbReference type="GO" id="GO:0043231">
    <property type="term" value="C:intracellular membrane-bounded organelle"/>
    <property type="evidence" value="ECO:0000314"/>
    <property type="project" value="HPA"/>
</dbReference>
<dbReference type="GO" id="GO:0019899">
    <property type="term" value="F:enzyme binding"/>
    <property type="evidence" value="ECO:0000353"/>
    <property type="project" value="BHF-UCL"/>
</dbReference>
<dbReference type="GO" id="GO:0004857">
    <property type="term" value="F:enzyme inhibitor activity"/>
    <property type="evidence" value="ECO:0000250"/>
    <property type="project" value="BHF-UCL"/>
</dbReference>
<dbReference type="GO" id="GO:0015020">
    <property type="term" value="F:glucuronosyltransferase activity"/>
    <property type="evidence" value="ECO:0000314"/>
    <property type="project" value="UniProtKB"/>
</dbReference>
<dbReference type="GO" id="GO:0046982">
    <property type="term" value="F:protein heterodimerization activity"/>
    <property type="evidence" value="ECO:0000353"/>
    <property type="project" value="BHF-UCL"/>
</dbReference>
<dbReference type="GO" id="GO:0042803">
    <property type="term" value="F:protein homodimerization activity"/>
    <property type="evidence" value="ECO:0000314"/>
    <property type="project" value="UniProtKB"/>
</dbReference>
<dbReference type="GO" id="GO:0045922">
    <property type="term" value="P:negative regulation of fatty acid metabolic process"/>
    <property type="evidence" value="ECO:0000250"/>
    <property type="project" value="BHF-UCL"/>
</dbReference>
<dbReference type="GO" id="GO:0006805">
    <property type="term" value="P:xenobiotic metabolic process"/>
    <property type="evidence" value="ECO:0000314"/>
    <property type="project" value="UniProtKB"/>
</dbReference>
<dbReference type="CDD" id="cd03784">
    <property type="entry name" value="GT1_Gtf-like"/>
    <property type="match status" value="1"/>
</dbReference>
<dbReference type="FunFam" id="3.40.50.2000:FF:000001">
    <property type="entry name" value="UDP-glucuronosyltransferase"/>
    <property type="match status" value="1"/>
</dbReference>
<dbReference type="FunFam" id="3.40.50.2000:FF:000092">
    <property type="entry name" value="UDP-glucuronosyltransferase"/>
    <property type="match status" value="1"/>
</dbReference>
<dbReference type="Gene3D" id="3.40.50.2000">
    <property type="entry name" value="Glycogen Phosphorylase B"/>
    <property type="match status" value="2"/>
</dbReference>
<dbReference type="InterPro" id="IPR050271">
    <property type="entry name" value="UDP-glycosyltransferase"/>
</dbReference>
<dbReference type="InterPro" id="IPR002213">
    <property type="entry name" value="UDP_glucos_trans"/>
</dbReference>
<dbReference type="InterPro" id="IPR035595">
    <property type="entry name" value="UDP_glycos_trans_CS"/>
</dbReference>
<dbReference type="PANTHER" id="PTHR48043">
    <property type="entry name" value="EG:EG0003.4 PROTEIN-RELATED"/>
    <property type="match status" value="1"/>
</dbReference>
<dbReference type="PANTHER" id="PTHR48043:SF161">
    <property type="entry name" value="UDP GLUCURONOSYLTRANSFERASE FAMILY 1 MEMBER A1"/>
    <property type="match status" value="1"/>
</dbReference>
<dbReference type="Pfam" id="PF00201">
    <property type="entry name" value="UDPGT"/>
    <property type="match status" value="1"/>
</dbReference>
<dbReference type="SUPFAM" id="SSF53756">
    <property type="entry name" value="UDP-Glycosyltransferase/glycogen phosphorylase"/>
    <property type="match status" value="1"/>
</dbReference>
<dbReference type="PROSITE" id="PS00375">
    <property type="entry name" value="UDPGT"/>
    <property type="match status" value="1"/>
</dbReference>
<protein>
    <recommendedName>
        <fullName>UDP-glucuronosyltransferase 1A6</fullName>
        <shortName evidence="12">UGT1A6</shortName>
        <ecNumber evidence="4 9">2.4.1.17</ecNumber>
    </recommendedName>
    <alternativeName>
        <fullName>Phenol-metabolizing UDP-glucuronosyltransferase</fullName>
    </alternativeName>
    <alternativeName>
        <fullName>UDP-glucuronosyltransferase 1-6</fullName>
        <shortName>UDPGT 1-6</shortName>
        <shortName>UGT1*6</shortName>
        <shortName>UGT1-06</shortName>
        <shortName>UGT1.6</shortName>
    </alternativeName>
    <alternativeName>
        <fullName>UDP-glucuronosyltransferase 1-F</fullName>
        <shortName>UGT-1F</shortName>
        <shortName>UGT1F</shortName>
    </alternativeName>
</protein>
<feature type="signal peptide" evidence="2">
    <location>
        <begin position="1"/>
        <end position="26"/>
    </location>
</feature>
<feature type="chain" id="PRO_0000036005" description="UDP-glucuronosyltransferase 1A6">
    <location>
        <begin position="27"/>
        <end position="532"/>
    </location>
</feature>
<feature type="transmembrane region" description="Helical" evidence="2">
    <location>
        <begin position="490"/>
        <end position="506"/>
    </location>
</feature>
<feature type="glycosylation site" description="N-linked (GlcNAc...) asparagine" evidence="2">
    <location>
        <position position="294"/>
    </location>
</feature>
<feature type="glycosylation site" description="N-linked (GlcNAc...) asparagine" evidence="2">
    <location>
        <position position="346"/>
    </location>
</feature>
<feature type="splice variant" id="VSP_045779" description="In isoform 2." evidence="13">
    <location>
        <begin position="1"/>
        <end position="267"/>
    </location>
</feature>
<feature type="splice variant" id="VSP_053962" description="In isoform 3." evidence="14">
    <original>SYKENIMRLSSLHKDRPVEPLDLAVFWVEFVMRHKGAPHLRPAAHDLTWYQYHSLDVIGFLLAVVLTVAFITFKCCAYGYRKCLGKKGRVKKAHKSKTH</original>
    <variation>RKKQQSGRQM</variation>
    <location>
        <begin position="434"/>
        <end position="532"/>
    </location>
</feature>
<feature type="sequence variant" id="VAR_024685" description="In allele UGT1A6*2, allele UGT1A6*3 and allele UGT1A6*4; dbSNP:rs6759892." evidence="5">
    <original>S</original>
    <variation>A</variation>
    <location>
        <position position="7"/>
    </location>
</feature>
<feature type="sequence variant" id="VAR_026628" description="In dbSNP:rs1042708." evidence="3">
    <original>S</original>
    <variation>Y</variation>
    <location>
        <position position="70"/>
    </location>
</feature>
<feature type="sequence variant" id="VAR_014784" description="In allele UGT1A6*2; dbSNP:rs2070959." evidence="5 7 10 11">
    <original>T</original>
    <variation>A</variation>
    <location>
        <position position="181"/>
    </location>
</feature>
<feature type="sequence variant" id="VAR_015559" description="In allele UGT1A6*2 and allele UGT1A6*4; dbSNP:rs1105879." evidence="5 7 10 11">
    <original>R</original>
    <variation>S</variation>
    <location>
        <position position="184"/>
    </location>
</feature>
<feature type="sequence variant" id="VAR_026629" description="In dbSNP:rs1042709." evidence="3">
    <original>A</original>
    <variation>P</variation>
    <location>
        <position position="510"/>
    </location>
</feature>
<feature type="sequence conflict" description="In Ref. 1; AAA61251." evidence="15" ref="1">
    <original>E</original>
    <variation>K</variation>
    <location>
        <position position="231"/>
    </location>
</feature>
<feature type="sequence conflict" description="In Ref. 1; AAA61251." evidence="15" ref="1">
    <original>YQK</original>
    <variation>SE</variation>
    <location>
        <begin position="247"/>
        <end position="249"/>
    </location>
</feature>
<feature type="sequence conflict" description="In Ref. 1; AAA61251." evidence="15" ref="1">
    <original>I</original>
    <variation>N</variation>
    <location>
        <position position="328"/>
    </location>
</feature>
<feature type="sequence conflict" description="In Ref. 6; BM924331." evidence="15" ref="6">
    <original>S</original>
    <variation>F</variation>
    <location>
        <position position="419"/>
    </location>
</feature>
<feature type="sequence conflict" description="In Ref. 6; BM924331." evidence="15" ref="6">
    <original>H</original>
    <variation>S</variation>
    <location>
        <position position="446"/>
    </location>
</feature>
<feature type="sequence conflict" description="In Ref. 6; BM924331." evidence="15" ref="6">
    <original>K</original>
    <variation>Q</variation>
    <location>
        <position position="468"/>
    </location>
</feature>
<feature type="sequence conflict" description="In Ref. 6; BM924331." evidence="15" ref="6">
    <original>AA</original>
    <variation>GS</variation>
    <location>
        <begin position="476"/>
        <end position="477"/>
    </location>
</feature>
<feature type="sequence conflict" description="In Ref. 1; AAA61251." evidence="15" ref="1">
    <original>R</original>
    <variation>P</variation>
    <location>
        <position position="514"/>
    </location>
</feature>
<sequence>MACLLRSFQRISAGVFFLALWGMVVGDKLLVVPQDGSHWLSMKDIVEVLSDRGHEIVVVVPEVNLLLKESKYYTRKIYPVPYDQEELKNRYQSFGNNHFAERSFLTAPQTEYRNNMIVIGLYFINCQSLLQDRDTLNFFKESKFDALFTDPALPCGVILAEYLGLPSVYLFRGFPCSLEHTFSRSPDPVSYIPRCYTKFSDHMTFSQRVANFLVNLLEPYLFYCLFSKYEELASAVLKRDVDIITLYQKVSVWLLRYDFVLEYPRPVMPNMVFIGGINCKKRKDLSQEFEAYINASGEHGIVVFSLGSMVSEIPEKKAMAIADALGKIPQTVLWRYTGTRPSNLANNTILVKWLPQNDLLGHPMTRAFITHAGSHGVYESICNGVPMVMMPLFGDQMDNAKRMETKGAGVTLNVLEMTSEDLENALKAVINDKSYKENIMRLSSLHKDRPVEPLDLAVFWVEFVMRHKGAPHLRPAAHDLTWYQYHSLDVIGFLLAVVLTVAFITFKCCAYGYRKCLGKKGRVKKAHKSKTH</sequence>
<reference key="1">
    <citation type="journal article" date="1992" name="J. Biol. Chem.">
        <title>A novel complex locus UGT1 encodes human bilirubin, phenol, and other UDP-glucuronosyltransferase isozymes with identical carboxyl termini.</title>
        <authorList>
            <person name="Ritter J.K."/>
            <person name="Chen F."/>
            <person name="Sheen Y.Y."/>
            <person name="Tran H.M."/>
            <person name="Kimura S."/>
            <person name="Yeatman M.T."/>
            <person name="Owens I.S."/>
        </authorList>
    </citation>
    <scope>NUCLEOTIDE SEQUENCE [GENOMIC DNA]</scope>
    <scope>TISSUE SPECIFICITY</scope>
    <scope>VARIANTS TYR-70 AND PRO-510</scope>
</reference>
<reference key="2">
    <citation type="journal article" date="1988" name="Proc. Natl. Acad. Sci. U.S.A.">
        <title>Cloning and substrate specificity of a human phenol UDP-glucuronosyltransferase expressed in COS-7 cells.</title>
        <authorList>
            <person name="Harding D."/>
            <person name="Fournel-Gigleux S."/>
            <person name="Jackson M.R."/>
            <person name="Burchell B."/>
        </authorList>
    </citation>
    <scope>NUCLEOTIDE SEQUENCE [GENOMIC DNA / MRNA]</scope>
</reference>
<reference key="3">
    <citation type="journal article" date="2001" name="Pharmacogenetics">
        <title>Thirteen UDP-glucuronosyltransferase genes are encoded at the human UGT1 gene complex locus.</title>
        <authorList>
            <person name="Gong Q.H."/>
            <person name="Cho J.W."/>
            <person name="Huang T."/>
            <person name="Potter C."/>
            <person name="Gholami N."/>
            <person name="Basu N.K."/>
            <person name="Kubota S."/>
            <person name="Carvalho S."/>
            <person name="Pennington M.W."/>
            <person name="Owens I.S."/>
            <person name="Popescu N.C."/>
        </authorList>
    </citation>
    <scope>NUCLEOTIDE SEQUENCE [GENOMIC DNA]</scope>
</reference>
<reference key="4">
    <citation type="submission" date="2006-01" db="EMBL/GenBank/DDBJ databases">
        <authorList>
            <person name="Guillemette C."/>
            <person name="Levesque E."/>
            <person name="Girard H."/>
            <person name="Bernard O."/>
        </authorList>
    </citation>
    <scope>NUCLEOTIDE SEQUENCE [MRNA] (ISOFORM 3)</scope>
    <scope>VARIANTS ALA-181 AND SER-184</scope>
</reference>
<reference key="5">
    <citation type="journal article" date="2005" name="Nature">
        <title>Generation and annotation of the DNA sequences of human chromosomes 2 and 4.</title>
        <authorList>
            <person name="Hillier L.W."/>
            <person name="Graves T.A."/>
            <person name="Fulton R.S."/>
            <person name="Fulton L.A."/>
            <person name="Pepin K.H."/>
            <person name="Minx P."/>
            <person name="Wagner-McPherson C."/>
            <person name="Layman D."/>
            <person name="Wylie K."/>
            <person name="Sekhon M."/>
            <person name="Becker M.C."/>
            <person name="Fewell G.A."/>
            <person name="Delehaunty K.D."/>
            <person name="Miner T.L."/>
            <person name="Nash W.E."/>
            <person name="Kremitzki C."/>
            <person name="Oddy L."/>
            <person name="Du H."/>
            <person name="Sun H."/>
            <person name="Bradshaw-Cordum H."/>
            <person name="Ali J."/>
            <person name="Carter J."/>
            <person name="Cordes M."/>
            <person name="Harris A."/>
            <person name="Isak A."/>
            <person name="van Brunt A."/>
            <person name="Nguyen C."/>
            <person name="Du F."/>
            <person name="Courtney L."/>
            <person name="Kalicki J."/>
            <person name="Ozersky P."/>
            <person name="Abbott S."/>
            <person name="Armstrong J."/>
            <person name="Belter E.A."/>
            <person name="Caruso L."/>
            <person name="Cedroni M."/>
            <person name="Cotton M."/>
            <person name="Davidson T."/>
            <person name="Desai A."/>
            <person name="Elliott G."/>
            <person name="Erb T."/>
            <person name="Fronick C."/>
            <person name="Gaige T."/>
            <person name="Haakenson W."/>
            <person name="Haglund K."/>
            <person name="Holmes A."/>
            <person name="Harkins R."/>
            <person name="Kim K."/>
            <person name="Kruchowski S.S."/>
            <person name="Strong C.M."/>
            <person name="Grewal N."/>
            <person name="Goyea E."/>
            <person name="Hou S."/>
            <person name="Levy A."/>
            <person name="Martinka S."/>
            <person name="Mead K."/>
            <person name="McLellan M.D."/>
            <person name="Meyer R."/>
            <person name="Randall-Maher J."/>
            <person name="Tomlinson C."/>
            <person name="Dauphin-Kohlberg S."/>
            <person name="Kozlowicz-Reilly A."/>
            <person name="Shah N."/>
            <person name="Swearengen-Shahid S."/>
            <person name="Snider J."/>
            <person name="Strong J.T."/>
            <person name="Thompson J."/>
            <person name="Yoakum M."/>
            <person name="Leonard S."/>
            <person name="Pearman C."/>
            <person name="Trani L."/>
            <person name="Radionenko M."/>
            <person name="Waligorski J.E."/>
            <person name="Wang C."/>
            <person name="Rock S.M."/>
            <person name="Tin-Wollam A.-M."/>
            <person name="Maupin R."/>
            <person name="Latreille P."/>
            <person name="Wendl M.C."/>
            <person name="Yang S.-P."/>
            <person name="Pohl C."/>
            <person name="Wallis J.W."/>
            <person name="Spieth J."/>
            <person name="Bieri T.A."/>
            <person name="Berkowicz N."/>
            <person name="Nelson J.O."/>
            <person name="Osborne J."/>
            <person name="Ding L."/>
            <person name="Meyer R."/>
            <person name="Sabo A."/>
            <person name="Shotland Y."/>
            <person name="Sinha P."/>
            <person name="Wohldmann P.E."/>
            <person name="Cook L.L."/>
            <person name="Hickenbotham M.T."/>
            <person name="Eldred J."/>
            <person name="Williams D."/>
            <person name="Jones T.A."/>
            <person name="She X."/>
            <person name="Ciccarelli F.D."/>
            <person name="Izaurralde E."/>
            <person name="Taylor J."/>
            <person name="Schmutz J."/>
            <person name="Myers R.M."/>
            <person name="Cox D.R."/>
            <person name="Huang X."/>
            <person name="McPherson J.D."/>
            <person name="Mardis E.R."/>
            <person name="Clifton S.W."/>
            <person name="Warren W.C."/>
            <person name="Chinwalla A.T."/>
            <person name="Eddy S.R."/>
            <person name="Marra M.A."/>
            <person name="Ovcharenko I."/>
            <person name="Furey T.S."/>
            <person name="Miller W."/>
            <person name="Eichler E.E."/>
            <person name="Bork P."/>
            <person name="Suyama M."/>
            <person name="Torrents D."/>
            <person name="Waterston R.H."/>
            <person name="Wilson R.K."/>
        </authorList>
    </citation>
    <scope>NUCLEOTIDE SEQUENCE [LARGE SCALE GENOMIC DNA]</scope>
</reference>
<reference key="6">
    <citation type="journal article" date="2004" name="Genome Res.">
        <title>The status, quality, and expansion of the NIH full-length cDNA project: the Mammalian Gene Collection (MGC).</title>
        <authorList>
            <consortium name="The MGC Project Team"/>
        </authorList>
    </citation>
    <scope>NUCLEOTIDE SEQUENCE [LARGE SCALE MRNA] OF 1-488 (ISOFORM 2)</scope>
</reference>
<reference key="7">
    <citation type="journal article" date="1998" name="Arch. Biochem. Biophys.">
        <title>Aryl hydrocarbon receptor-inducible or constitutive expression of human UDP glucuronosyltransferase UGT1A6.</title>
        <authorList>
            <person name="Muenzel P.A."/>
            <person name="Lehmkoester T."/>
            <person name="Brueck M."/>
            <person name="Ritter J.K."/>
            <person name="Bock K.W."/>
        </authorList>
    </citation>
    <scope>NUCLEOTIDE SEQUENCE [GENOMIC DNA] OF 1-33</scope>
</reference>
<reference key="8">
    <citation type="journal article" date="2004" name="J. Lipid Res.">
        <title>Glucuronidation of oxidized fatty acids and prostaglandins B1 and E2 by human hepatic and recombinant UDP-glucuronosyltransferases.</title>
        <authorList>
            <person name="Little J.M."/>
            <person name="Kurkela M."/>
            <person name="Sonka J."/>
            <person name="Jaentti S."/>
            <person name="Ketola R."/>
            <person name="Bratton S."/>
            <person name="Finel M."/>
            <person name="Radominska-Pandya A."/>
        </authorList>
    </citation>
    <scope>FUNCTION</scope>
    <scope>CATALYTIC ACTIVITY</scope>
    <scope>BIOPHYSICOCHEMICAL PROPERTIES</scope>
</reference>
<reference key="9">
    <citation type="journal article" date="2007" name="Pharmacogenet. Genomics">
        <title>Genetic diversity at the UGT1 locus is amplified by a novel 3' alternative splicing mechanism leading to nine additional UGT1A proteins that act as regulators of glucuronidation activity.</title>
        <authorList>
            <person name="Girard H."/>
            <person name="Levesque E."/>
            <person name="Bellemare J."/>
            <person name="Journault K."/>
            <person name="Caillier B."/>
            <person name="Guillemette C."/>
        </authorList>
    </citation>
    <scope>ALTERNATIVE SPLICING</scope>
    <scope>TISSUE SPECIFICITY</scope>
</reference>
<reference key="10">
    <citation type="journal article" date="2010" name="Drug Metab. Dispos.">
        <title>Alternatively spliced products of the UGT1A gene interact with the enzymatically active proteins to inhibit glucuronosyltransferase activity in vitro.</title>
        <authorList>
            <person name="Bellemare J."/>
            <person name="Rouleau M."/>
            <person name="Girard H."/>
            <person name="Harvey M."/>
            <person name="Guillemette C."/>
        </authorList>
    </citation>
    <scope>FUNCTION</scope>
    <scope>SUBUNIT</scope>
</reference>
<reference key="11">
    <citation type="journal article" date="2011" name="Drug Metab. Pharmacokinet.">
        <title>Identification of the human UDP-glucuronosyltransferase isoforms involved in the glucuronidation of the phytochemical ferulic acid.</title>
        <authorList>
            <person name="Li X."/>
            <person name="Shang L."/>
            <person name="Wu Y."/>
            <person name="Abbas S."/>
            <person name="Li D."/>
            <person name="Netter P."/>
            <person name="Ouzzine M."/>
            <person name="Wang H."/>
            <person name="Magdalou J."/>
        </authorList>
    </citation>
    <scope>FUNCTION</scope>
    <scope>CATALYTIC ACTIVITY</scope>
    <scope>BIOPHYSICOCHEMICAL PROPERTIES</scope>
</reference>
<reference key="12">
    <citation type="journal article" date="2014" name="J. Proteomics">
        <title>An enzyme assisted RP-RPLC approach for in-depth analysis of human liver phosphoproteome.</title>
        <authorList>
            <person name="Bian Y."/>
            <person name="Song C."/>
            <person name="Cheng K."/>
            <person name="Dong M."/>
            <person name="Wang F."/>
            <person name="Huang J."/>
            <person name="Sun D."/>
            <person name="Wang L."/>
            <person name="Ye M."/>
            <person name="Zou H."/>
        </authorList>
    </citation>
    <scope>IDENTIFICATION BY MASS SPECTROMETRY [LARGE SCALE ANALYSIS]</scope>
    <source>
        <tissue>Liver</tissue>
    </source>
</reference>
<reference key="13">
    <citation type="journal article" date="1997" name="Pharmacogenetics">
        <title>Genetic polymorphism in the human UGT1A6 (planar phenol) UDP-glucuronosyltransferase: pharmacological implications.</title>
        <authorList>
            <person name="Ciotti M."/>
            <person name="Marrone A."/>
            <person name="Potter C."/>
            <person name="Owens I.S."/>
        </authorList>
    </citation>
    <scope>VARIANTS ALA-181 AND SER-184</scope>
</reference>
<reference key="14">
    <citation type="journal article" date="2004" name="Pharmacogenetics">
        <title>Human UGT1A6 pharmacogenetics: identification of a novel SNP, characterization of allele frequencies and functional analysis of recombinant allozymes in human liver tissue and in cultured cells.</title>
        <authorList>
            <person name="Nagar S."/>
            <person name="Zalatoris J.J."/>
            <person name="Blanchard R.L."/>
        </authorList>
    </citation>
    <scope>VARIANTS ALA-7; ALA-181 AND SER-184</scope>
</reference>
<reference key="15">
    <citation type="journal article" date="2009" name="Hum. Mutat.">
        <title>Analysis of inherited genetic variations at the UGT1 locus in the French-Canadian population.</title>
        <authorList>
            <person name="Menard V."/>
            <person name="Girard H."/>
            <person name="Harvey M."/>
            <person name="Perusse L."/>
            <person name="Guillemette C."/>
        </authorList>
    </citation>
    <scope>VARIANTS ALA-181 AND SER-184</scope>
</reference>
<keyword id="KW-0025">Alternative splicing</keyword>
<keyword id="KW-0256">Endoplasmic reticulum</keyword>
<keyword id="KW-0325">Glycoprotein</keyword>
<keyword id="KW-0328">Glycosyltransferase</keyword>
<keyword id="KW-0472">Membrane</keyword>
<keyword id="KW-0492">Microsome</keyword>
<keyword id="KW-1267">Proteomics identification</keyword>
<keyword id="KW-1185">Reference proteome</keyword>
<keyword id="KW-0732">Signal</keyword>
<keyword id="KW-0808">Transferase</keyword>
<keyword id="KW-0812">Transmembrane</keyword>
<keyword id="KW-1133">Transmembrane helix</keyword>